<reference key="1">
    <citation type="journal article" date="1994" name="Eur. J. Biochem.">
        <title>Expression of the mau genes involved in methylamine metabolism in Paracoccus denitrificans is under control of a LysR-type transcriptional activator.</title>
        <authorList>
            <person name="van Spanning R.J.M."/>
            <person name="van der Palen C.J."/>
            <person name="Slotboom D.J."/>
            <person name="Reijnders W.N."/>
            <person name="Stouthamer A.H."/>
            <person name="Duine J.A."/>
        </authorList>
    </citation>
    <scope>NUCLEOTIDE SEQUENCE [GENOMIC DNA]</scope>
    <source>
        <strain>ATCC 17741 / DSM 413 / NBRC 16712 / NCCB 22021 / NCIMB 11627</strain>
    </source>
</reference>
<reference key="2">
    <citation type="journal article" date="1992" name="Biochem. Biophys. Res. Commun.">
        <title>The genetic organization of the mau gene cluster of the facultative autotroph Paracoccus denitrificans.</title>
        <authorList>
            <person name="Chistoserdov A.Y."/>
            <person name="Boyd J."/>
            <person name="Mathews F.S."/>
            <person name="Lidstrom M.E."/>
        </authorList>
    </citation>
    <scope>NUCLEOTIDE SEQUENCE [GENOMIC DNA] OF 129-277</scope>
</reference>
<dbReference type="EMBL" id="U12464">
    <property type="protein sequence ID" value="AAA56723.1"/>
    <property type="molecule type" value="Genomic_DNA"/>
</dbReference>
<dbReference type="EMBL" id="M90099">
    <property type="protein sequence ID" value="AAA25579.1"/>
    <property type="molecule type" value="Genomic_DNA"/>
</dbReference>
<dbReference type="PIR" id="S51048">
    <property type="entry name" value="PH0856"/>
</dbReference>
<dbReference type="RefSeq" id="WP_011750949.1">
    <property type="nucleotide sequence ID" value="NZ_PPGA01000007.1"/>
</dbReference>
<dbReference type="TCDB" id="5.A.1.3.1">
    <property type="family name" value="the disulfide bond oxidoreductase d (dsbd) family"/>
</dbReference>
<dbReference type="GeneID" id="93454751"/>
<dbReference type="OMA" id="LSTWSPC"/>
<dbReference type="UniPathway" id="UPA00895"/>
<dbReference type="GO" id="GO:0005886">
    <property type="term" value="C:plasma membrane"/>
    <property type="evidence" value="ECO:0007669"/>
    <property type="project" value="UniProtKB-SubCell"/>
</dbReference>
<evidence type="ECO:0000255" key="1"/>
<evidence type="ECO:0000305" key="2"/>
<protein>
    <recommendedName>
        <fullName>Methylamine utilization protein MauF</fullName>
    </recommendedName>
</protein>
<accession>P29897</accession>
<sequence>MVSVEDLHGLSAGQASVPDCKLFPQSPSAATRIAVLLAAALAGAAGGVALASAAGPQPLWAVLGAAAVAGGLLSTWSPCGYSSISLLRPDGRGLRAVAGWLPTFAMHGAGYGLGALMLGGLLGGIGLIAGFSGFGSTALLVLGLVGLAYGAHQLDFLRVPYPQRRAQVPHDARQRFPKWVIGGLYGLSLGLDYLTYVQTPLLYMMTLAAVFTGNIAHAIAIVALFNLGRFLPVAVNALPIPDYRVQAWLARHQENAALADGAILTALGAGFTVLALI</sequence>
<proteinExistence type="predicted"/>
<feature type="chain" id="PRO_0000208940" description="Methylamine utilization protein MauF">
    <location>
        <begin position="1"/>
        <end position="277"/>
    </location>
</feature>
<feature type="transmembrane region" description="Helical" evidence="1">
    <location>
        <begin position="33"/>
        <end position="53"/>
    </location>
</feature>
<feature type="transmembrane region" description="Helical" evidence="1">
    <location>
        <begin position="59"/>
        <end position="79"/>
    </location>
</feature>
<feature type="transmembrane region" description="Helical" evidence="1">
    <location>
        <begin position="111"/>
        <end position="131"/>
    </location>
</feature>
<feature type="transmembrane region" description="Helical" evidence="1">
    <location>
        <begin position="132"/>
        <end position="152"/>
    </location>
</feature>
<feature type="transmembrane region" description="Helical" evidence="1">
    <location>
        <begin position="179"/>
        <end position="199"/>
    </location>
</feature>
<feature type="transmembrane region" description="Helical" evidence="1">
    <location>
        <begin position="205"/>
        <end position="225"/>
    </location>
</feature>
<feature type="transmembrane region" description="Helical" evidence="1">
    <location>
        <begin position="257"/>
        <end position="277"/>
    </location>
</feature>
<name>MAUF_PARDE</name>
<gene>
    <name type="primary">mauF</name>
</gene>
<keyword id="KW-1003">Cell membrane</keyword>
<keyword id="KW-0472">Membrane</keyword>
<keyword id="KW-0812">Transmembrane</keyword>
<keyword id="KW-1133">Transmembrane helix</keyword>
<comment type="pathway">
    <text>One-carbon metabolism; methylamine degradation.</text>
</comment>
<comment type="subcellular location">
    <subcellularLocation>
        <location evidence="2">Cell membrane</location>
        <topology evidence="2">Multi-pass membrane protein</topology>
    </subcellularLocation>
</comment>
<organism>
    <name type="scientific">Paracoccus denitrificans</name>
    <dbReference type="NCBI Taxonomy" id="266"/>
    <lineage>
        <taxon>Bacteria</taxon>
        <taxon>Pseudomonadati</taxon>
        <taxon>Pseudomonadota</taxon>
        <taxon>Alphaproteobacteria</taxon>
        <taxon>Rhodobacterales</taxon>
        <taxon>Paracoccaceae</taxon>
        <taxon>Paracoccus</taxon>
    </lineage>
</organism>